<name>TMT3_CATRO</name>
<sequence>MAAAPVFFPSSVVVSVYRAHGYAFSCSSLLSQLPAIKLSSYRPTRTDHTAITLLPNSNRIASRLQAMQSPTFEVNGDGKTEEVEKLQKGIAEFYDESSGIWEEIWGDHMHHGFYDPGTTVSLADHRTAQIRMIEEALRFASVSDDPMKKPKRIVDVGCGIGGSSRYFARKYDAECKGITLSPVQAKRAQALAVAEGLQGTVSFEVADALAQPFPHGQFDLVWSMESGEHMPDKEKFVRELVRVAAPGATIIIVTWCHRDLSPSEHSLKPQEQKLLNKICDSYYLPAWCSTADYVKILESLFLEDIKRADWSEYVAPFWPAVIRSALTWKGFTSLIRSGWKTIKGAMVMPLMIEGFKKDVIKFSVITCRKPE</sequence>
<accession>A0A8X8M4W6</accession>
<comment type="function">
    <text evidence="1 5">S-adenosyl-L-methionine-dependent N-methyltransferase involved in the biosynthesis of biologically active monoterpenoid indole alkaloids (MIAs) natural products including vindoline (By similarity). Inactive with picrinine as substrate (PubMed:35166361).</text>
</comment>
<comment type="catalytic activity">
    <reaction evidence="1">
        <text>picrinine + S-adenosyl-L-methionine = ervincine + S-adenosyl-L-homocysteine + H(+)</text>
        <dbReference type="Rhea" id="RHEA:76143"/>
        <dbReference type="ChEBI" id="CHEBI:15378"/>
        <dbReference type="ChEBI" id="CHEBI:57856"/>
        <dbReference type="ChEBI" id="CHEBI:59789"/>
        <dbReference type="ChEBI" id="CHEBI:70505"/>
        <dbReference type="ChEBI" id="CHEBI:194555"/>
    </reaction>
    <physiologicalReaction direction="left-to-right" evidence="1">
        <dbReference type="Rhea" id="RHEA:76144"/>
    </physiologicalReaction>
</comment>
<comment type="pathway">
    <text evidence="1">Alkaloid biosynthesis; vindoline biosynthesis.</text>
</comment>
<comment type="subunit">
    <text evidence="2">Homodimer.</text>
</comment>
<comment type="subcellular location">
    <subcellularLocation>
        <location evidence="5">Plastid</location>
        <location evidence="5">Chloroplast inner membrane</location>
    </subcellularLocation>
</comment>
<comment type="similarity">
    <text evidence="4">Belongs to the class I-like SAM-binding methyltransferase superfamily. gTMT family.</text>
</comment>
<evidence type="ECO:0000250" key="1">
    <source>
        <dbReference type="UniProtKB" id="A0A8X8M501"/>
    </source>
</evidence>
<evidence type="ECO:0000250" key="2">
    <source>
        <dbReference type="UniProtKB" id="W5U2K2"/>
    </source>
</evidence>
<evidence type="ECO:0000255" key="3"/>
<evidence type="ECO:0000255" key="4">
    <source>
        <dbReference type="PROSITE-ProRule" id="PRU00914"/>
    </source>
</evidence>
<evidence type="ECO:0000269" key="5">
    <source>
    </source>
</evidence>
<evidence type="ECO:0000303" key="6">
    <source>
    </source>
</evidence>
<evidence type="ECO:0000305" key="7"/>
<keyword id="KW-0017">Alkaloid metabolism</keyword>
<keyword id="KW-0150">Chloroplast</keyword>
<keyword id="KW-0472">Membrane</keyword>
<keyword id="KW-0489">Methyltransferase</keyword>
<keyword id="KW-0934">Plastid</keyword>
<keyword id="KW-1001">Plastid inner membrane</keyword>
<keyword id="KW-0949">S-adenosyl-L-methionine</keyword>
<keyword id="KW-0808">Transferase</keyword>
<keyword id="KW-0809">Transit peptide</keyword>
<gene>
    <name evidence="6" type="primary">TMT3</name>
    <name evidence="6" type="synonym">gTMT</name>
</gene>
<protein>
    <recommendedName>
        <fullName evidence="6">Gamma-tocopherol methyltransferase, chloroplastic</fullName>
        <shortName evidence="6">pCrgammaTMT</shortName>
        <ecNumber evidence="1">2.1.1.-</ecNumber>
    </recommendedName>
    <alternativeName>
        <fullName evidence="6">Gamma-tocopherol-like methyltransferase 3</fullName>
    </alternativeName>
    <alternativeName>
        <fullName evidence="7">Picrinine-N-methytransferase TMT3</fullName>
    </alternativeName>
</protein>
<reference key="1">
    <citation type="journal article" date="2022" name="Plant Cell Physiol.">
        <title>Tonoplast and peroxisome targeting of gamma-tocopherol N-methyltransferase homologs involved in the synthesis of monoterpene indole alkaloids.</title>
        <authorList>
            <person name="Koudounas K."/>
            <person name="Guirimand G."/>
            <person name="Hoyos L.F.R."/>
            <person name="Carqueijeiro I."/>
            <person name="Cruz P.L."/>
            <person name="Stander E."/>
            <person name="Kulagina N."/>
            <person name="Perrin J."/>
            <person name="Oudin A."/>
            <person name="Besseau S."/>
            <person name="Lanoue A."/>
            <person name="Atehortua L."/>
            <person name="St-Pierre B."/>
            <person name="Giglioli-Guivarc'h N."/>
            <person name="Papon N."/>
            <person name="O'Connor S.E."/>
            <person name="Courdavault V."/>
        </authorList>
    </citation>
    <scope>NUCLEOTIDE SEQUENCE [MRNA]</scope>
    <scope>FUNCTION</scope>
    <scope>SUBCELLULAR LOCATION</scope>
    <scope>GENE FAMILY</scope>
</reference>
<dbReference type="EC" id="2.1.1.-" evidence="1"/>
<dbReference type="EMBL" id="MZ367709">
    <property type="protein sequence ID" value="URY10633.1"/>
    <property type="molecule type" value="mRNA"/>
</dbReference>
<dbReference type="SMR" id="A0A8X8M4W6"/>
<dbReference type="OrthoDB" id="8300214at2759"/>
<dbReference type="UniPathway" id="UPA00365"/>
<dbReference type="GO" id="GO:0009706">
    <property type="term" value="C:chloroplast inner membrane"/>
    <property type="evidence" value="ECO:0000314"/>
    <property type="project" value="UniProtKB"/>
</dbReference>
<dbReference type="GO" id="GO:0008757">
    <property type="term" value="F:S-adenosylmethionine-dependent methyltransferase activity"/>
    <property type="evidence" value="ECO:0007669"/>
    <property type="project" value="InterPro"/>
</dbReference>
<dbReference type="GO" id="GO:0009820">
    <property type="term" value="P:alkaloid metabolic process"/>
    <property type="evidence" value="ECO:0007669"/>
    <property type="project" value="UniProtKB-KW"/>
</dbReference>
<dbReference type="GO" id="GO:0032259">
    <property type="term" value="P:methylation"/>
    <property type="evidence" value="ECO:0007669"/>
    <property type="project" value="UniProtKB-KW"/>
</dbReference>
<dbReference type="CDD" id="cd02440">
    <property type="entry name" value="AdoMet_MTases"/>
    <property type="match status" value="1"/>
</dbReference>
<dbReference type="Gene3D" id="3.40.50.150">
    <property type="entry name" value="Vaccinia Virus protein VP39"/>
    <property type="match status" value="1"/>
</dbReference>
<dbReference type="InterPro" id="IPR013216">
    <property type="entry name" value="Methyltransf_11"/>
</dbReference>
<dbReference type="InterPro" id="IPR025774">
    <property type="entry name" value="MTs_g-TMT"/>
</dbReference>
<dbReference type="InterPro" id="IPR029063">
    <property type="entry name" value="SAM-dependent_MTases_sf"/>
</dbReference>
<dbReference type="PANTHER" id="PTHR43591:SF81">
    <property type="entry name" value="MAGNESIUM PROTOPORPHYRIN IX METHYLTRANSFERASE, CHLOROPLASTIC-RELATED"/>
    <property type="match status" value="1"/>
</dbReference>
<dbReference type="PANTHER" id="PTHR43591">
    <property type="entry name" value="METHYLTRANSFERASE"/>
    <property type="match status" value="1"/>
</dbReference>
<dbReference type="Pfam" id="PF08241">
    <property type="entry name" value="Methyltransf_11"/>
    <property type="match status" value="1"/>
</dbReference>
<dbReference type="SUPFAM" id="SSF53335">
    <property type="entry name" value="S-adenosyl-L-methionine-dependent methyltransferases"/>
    <property type="match status" value="1"/>
</dbReference>
<dbReference type="PROSITE" id="PS51581">
    <property type="entry name" value="SAM_GTMT"/>
    <property type="match status" value="1"/>
</dbReference>
<proteinExistence type="evidence at transcript level"/>
<feature type="transit peptide" description="Chloroplast" evidence="3">
    <location>
        <begin position="1"/>
        <end position="65"/>
    </location>
</feature>
<feature type="chain" id="PRO_0000458249" description="Gamma-tocopherol methyltransferase, chloroplastic">
    <location>
        <begin position="66"/>
        <end position="371"/>
    </location>
</feature>
<feature type="region of interest" description="SAM motif I" evidence="4">
    <location>
        <begin position="153"/>
        <end position="162"/>
    </location>
</feature>
<feature type="region of interest" description="SAM motif II" evidence="4">
    <location>
        <begin position="216"/>
        <end position="224"/>
    </location>
</feature>
<feature type="region of interest" description="SAM motif III" evidence="4">
    <location>
        <begin position="243"/>
        <end position="252"/>
    </location>
</feature>
<organism>
    <name type="scientific">Catharanthus roseus</name>
    <name type="common">Madagascar periwinkle</name>
    <name type="synonym">Vinca rosea</name>
    <dbReference type="NCBI Taxonomy" id="4058"/>
    <lineage>
        <taxon>Eukaryota</taxon>
        <taxon>Viridiplantae</taxon>
        <taxon>Streptophyta</taxon>
        <taxon>Embryophyta</taxon>
        <taxon>Tracheophyta</taxon>
        <taxon>Spermatophyta</taxon>
        <taxon>Magnoliopsida</taxon>
        <taxon>eudicotyledons</taxon>
        <taxon>Gunneridae</taxon>
        <taxon>Pentapetalae</taxon>
        <taxon>asterids</taxon>
        <taxon>lamiids</taxon>
        <taxon>Gentianales</taxon>
        <taxon>Apocynaceae</taxon>
        <taxon>Rauvolfioideae</taxon>
        <taxon>Vinceae</taxon>
        <taxon>Catharanthinae</taxon>
        <taxon>Catharanthus</taxon>
    </lineage>
</organism>